<reference key="1">
    <citation type="journal article" date="2007" name="J. Bacteriol.">
        <title>Complete genome of acute rheumatic fever-associated serotype M5 Streptococcus pyogenes strain Manfredo.</title>
        <authorList>
            <person name="Holden M.T.G."/>
            <person name="Scott A."/>
            <person name="Cherevach I."/>
            <person name="Chillingworth T."/>
            <person name="Churcher C."/>
            <person name="Cronin A."/>
            <person name="Dowd L."/>
            <person name="Feltwell T."/>
            <person name="Hamlin N."/>
            <person name="Holroyd S."/>
            <person name="Jagels K."/>
            <person name="Moule S."/>
            <person name="Mungall K."/>
            <person name="Quail M.A."/>
            <person name="Price C."/>
            <person name="Rabbinowitsch E."/>
            <person name="Sharp S."/>
            <person name="Skelton J."/>
            <person name="Whitehead S."/>
            <person name="Barrell B.G."/>
            <person name="Kehoe M."/>
            <person name="Parkhill J."/>
        </authorList>
    </citation>
    <scope>NUCLEOTIDE SEQUENCE [LARGE SCALE GENOMIC DNA]</scope>
    <source>
        <strain>Manfredo</strain>
    </source>
</reference>
<gene>
    <name evidence="1" type="primary">aroB</name>
    <name type="ordered locus">SpyM50557</name>
</gene>
<evidence type="ECO:0000255" key="1">
    <source>
        <dbReference type="HAMAP-Rule" id="MF_00110"/>
    </source>
</evidence>
<organism>
    <name type="scientific">Streptococcus pyogenes serotype M5 (strain Manfredo)</name>
    <dbReference type="NCBI Taxonomy" id="160491"/>
    <lineage>
        <taxon>Bacteria</taxon>
        <taxon>Bacillati</taxon>
        <taxon>Bacillota</taxon>
        <taxon>Bacilli</taxon>
        <taxon>Lactobacillales</taxon>
        <taxon>Streptococcaceae</taxon>
        <taxon>Streptococcus</taxon>
    </lineage>
</organism>
<name>AROB_STRPG</name>
<feature type="chain" id="PRO_1000094636" description="3-dehydroquinate synthase">
    <location>
        <begin position="1"/>
        <end position="357"/>
    </location>
</feature>
<feature type="binding site" evidence="1">
    <location>
        <begin position="104"/>
        <end position="108"/>
    </location>
    <ligand>
        <name>NAD(+)</name>
        <dbReference type="ChEBI" id="CHEBI:57540"/>
    </ligand>
</feature>
<feature type="binding site" evidence="1">
    <location>
        <begin position="128"/>
        <end position="129"/>
    </location>
    <ligand>
        <name>NAD(+)</name>
        <dbReference type="ChEBI" id="CHEBI:57540"/>
    </ligand>
</feature>
<feature type="binding site" evidence="1">
    <location>
        <position position="141"/>
    </location>
    <ligand>
        <name>NAD(+)</name>
        <dbReference type="ChEBI" id="CHEBI:57540"/>
    </ligand>
</feature>
<feature type="binding site" evidence="1">
    <location>
        <begin position="168"/>
        <end position="171"/>
    </location>
    <ligand>
        <name>NAD(+)</name>
        <dbReference type="ChEBI" id="CHEBI:57540"/>
    </ligand>
</feature>
<feature type="binding site" evidence="1">
    <location>
        <position position="183"/>
    </location>
    <ligand>
        <name>Zn(2+)</name>
        <dbReference type="ChEBI" id="CHEBI:29105"/>
    </ligand>
</feature>
<feature type="binding site" evidence="1">
    <location>
        <position position="243"/>
    </location>
    <ligand>
        <name>Zn(2+)</name>
        <dbReference type="ChEBI" id="CHEBI:29105"/>
    </ligand>
</feature>
<feature type="binding site" evidence="1">
    <location>
        <position position="260"/>
    </location>
    <ligand>
        <name>Zn(2+)</name>
        <dbReference type="ChEBI" id="CHEBI:29105"/>
    </ligand>
</feature>
<comment type="function">
    <text evidence="1">Catalyzes the conversion of 3-deoxy-D-arabino-heptulosonate 7-phosphate (DAHP) to dehydroquinate (DHQ).</text>
</comment>
<comment type="catalytic activity">
    <reaction evidence="1">
        <text>7-phospho-2-dehydro-3-deoxy-D-arabino-heptonate = 3-dehydroquinate + phosphate</text>
        <dbReference type="Rhea" id="RHEA:21968"/>
        <dbReference type="ChEBI" id="CHEBI:32364"/>
        <dbReference type="ChEBI" id="CHEBI:43474"/>
        <dbReference type="ChEBI" id="CHEBI:58394"/>
        <dbReference type="EC" id="4.2.3.4"/>
    </reaction>
</comment>
<comment type="cofactor">
    <cofactor evidence="1">
        <name>Co(2+)</name>
        <dbReference type="ChEBI" id="CHEBI:48828"/>
    </cofactor>
    <cofactor evidence="1">
        <name>Zn(2+)</name>
        <dbReference type="ChEBI" id="CHEBI:29105"/>
    </cofactor>
    <text evidence="1">Binds 1 divalent metal cation per subunit. Can use either Co(2+) or Zn(2+).</text>
</comment>
<comment type="cofactor">
    <cofactor evidence="1">
        <name>NAD(+)</name>
        <dbReference type="ChEBI" id="CHEBI:57540"/>
    </cofactor>
</comment>
<comment type="pathway">
    <text evidence="1">Metabolic intermediate biosynthesis; chorismate biosynthesis; chorismate from D-erythrose 4-phosphate and phosphoenolpyruvate: step 2/7.</text>
</comment>
<comment type="subcellular location">
    <subcellularLocation>
        <location evidence="1">Cytoplasm</location>
    </subcellularLocation>
</comment>
<comment type="similarity">
    <text evidence="1">Belongs to the sugar phosphate cyclases superfamily. Dehydroquinate synthase family.</text>
</comment>
<dbReference type="EC" id="4.2.3.4" evidence="1"/>
<dbReference type="EMBL" id="AM295007">
    <property type="protein sequence ID" value="CAM29895.1"/>
    <property type="molecule type" value="Genomic_DNA"/>
</dbReference>
<dbReference type="RefSeq" id="WP_011888717.1">
    <property type="nucleotide sequence ID" value="NC_009332.1"/>
</dbReference>
<dbReference type="SMR" id="A2RDH0"/>
<dbReference type="KEGG" id="spf:SpyM50557"/>
<dbReference type="HOGENOM" id="CLU_001201_0_1_9"/>
<dbReference type="UniPathway" id="UPA00053">
    <property type="reaction ID" value="UER00085"/>
</dbReference>
<dbReference type="GO" id="GO:0005737">
    <property type="term" value="C:cytoplasm"/>
    <property type="evidence" value="ECO:0007669"/>
    <property type="project" value="UniProtKB-SubCell"/>
</dbReference>
<dbReference type="GO" id="GO:0003856">
    <property type="term" value="F:3-dehydroquinate synthase activity"/>
    <property type="evidence" value="ECO:0007669"/>
    <property type="project" value="UniProtKB-UniRule"/>
</dbReference>
<dbReference type="GO" id="GO:0046872">
    <property type="term" value="F:metal ion binding"/>
    <property type="evidence" value="ECO:0007669"/>
    <property type="project" value="UniProtKB-KW"/>
</dbReference>
<dbReference type="GO" id="GO:0000166">
    <property type="term" value="F:nucleotide binding"/>
    <property type="evidence" value="ECO:0007669"/>
    <property type="project" value="UniProtKB-KW"/>
</dbReference>
<dbReference type="GO" id="GO:0008652">
    <property type="term" value="P:amino acid biosynthetic process"/>
    <property type="evidence" value="ECO:0007669"/>
    <property type="project" value="UniProtKB-KW"/>
</dbReference>
<dbReference type="GO" id="GO:0009073">
    <property type="term" value="P:aromatic amino acid family biosynthetic process"/>
    <property type="evidence" value="ECO:0007669"/>
    <property type="project" value="UniProtKB-KW"/>
</dbReference>
<dbReference type="GO" id="GO:0009423">
    <property type="term" value="P:chorismate biosynthetic process"/>
    <property type="evidence" value="ECO:0007669"/>
    <property type="project" value="UniProtKB-UniRule"/>
</dbReference>
<dbReference type="CDD" id="cd08195">
    <property type="entry name" value="DHQS"/>
    <property type="match status" value="1"/>
</dbReference>
<dbReference type="FunFam" id="3.40.50.1970:FF:000007">
    <property type="entry name" value="Pentafunctional AROM polypeptide"/>
    <property type="match status" value="1"/>
</dbReference>
<dbReference type="Gene3D" id="3.40.50.1970">
    <property type="match status" value="1"/>
</dbReference>
<dbReference type="Gene3D" id="1.20.1090.10">
    <property type="entry name" value="Dehydroquinate synthase-like - alpha domain"/>
    <property type="match status" value="1"/>
</dbReference>
<dbReference type="HAMAP" id="MF_00110">
    <property type="entry name" value="DHQ_synthase"/>
    <property type="match status" value="1"/>
</dbReference>
<dbReference type="InterPro" id="IPR050071">
    <property type="entry name" value="Dehydroquinate_synthase"/>
</dbReference>
<dbReference type="InterPro" id="IPR016037">
    <property type="entry name" value="DHQ_synth_AroB"/>
</dbReference>
<dbReference type="InterPro" id="IPR030963">
    <property type="entry name" value="DHQ_synth_fam"/>
</dbReference>
<dbReference type="InterPro" id="IPR030960">
    <property type="entry name" value="DHQS/DOIS_N"/>
</dbReference>
<dbReference type="InterPro" id="IPR056179">
    <property type="entry name" value="DHQS_C"/>
</dbReference>
<dbReference type="NCBIfam" id="TIGR01357">
    <property type="entry name" value="aroB"/>
    <property type="match status" value="1"/>
</dbReference>
<dbReference type="PANTHER" id="PTHR43622">
    <property type="entry name" value="3-DEHYDROQUINATE SYNTHASE"/>
    <property type="match status" value="1"/>
</dbReference>
<dbReference type="PANTHER" id="PTHR43622:SF1">
    <property type="entry name" value="3-DEHYDROQUINATE SYNTHASE"/>
    <property type="match status" value="1"/>
</dbReference>
<dbReference type="Pfam" id="PF01761">
    <property type="entry name" value="DHQ_synthase"/>
    <property type="match status" value="1"/>
</dbReference>
<dbReference type="Pfam" id="PF24621">
    <property type="entry name" value="DHQS_C"/>
    <property type="match status" value="1"/>
</dbReference>
<dbReference type="PIRSF" id="PIRSF001455">
    <property type="entry name" value="DHQ_synth"/>
    <property type="match status" value="1"/>
</dbReference>
<dbReference type="SUPFAM" id="SSF56796">
    <property type="entry name" value="Dehydroquinate synthase-like"/>
    <property type="match status" value="1"/>
</dbReference>
<keyword id="KW-0028">Amino-acid biosynthesis</keyword>
<keyword id="KW-0057">Aromatic amino acid biosynthesis</keyword>
<keyword id="KW-0170">Cobalt</keyword>
<keyword id="KW-0963">Cytoplasm</keyword>
<keyword id="KW-0456">Lyase</keyword>
<keyword id="KW-0479">Metal-binding</keyword>
<keyword id="KW-0520">NAD</keyword>
<keyword id="KW-0547">Nucleotide-binding</keyword>
<keyword id="KW-0862">Zinc</keyword>
<accession>A2RDH0</accession>
<proteinExistence type="inferred from homology"/>
<protein>
    <recommendedName>
        <fullName evidence="1">3-dehydroquinate synthase</fullName>
        <shortName evidence="1">DHQS</shortName>
        <ecNumber evidence="1">4.2.3.4</ecNumber>
    </recommendedName>
</protein>
<sequence>MPQTLHVHSRVKDYDILFTNHVLKTLADCLGERKQRKLLFITDQTVYHLYQTLFEEFAQQYNAFVHVCPPGGQSKSLERVSAIYDQLIAENFSKKDMIVTIGGGVVGDLGGFVAATYYRGIPYIQIPTTLLSQVDSSIGGKVGVHFKGLTNMIGSIYPPEAIIISTTFLETLPQREFSCGISEMLKIGFIHDRPLFQQLRDFQKETDKQGLERLIYQSISNKKRIVEQDEFENGLRMSLNFGHTLGHAIESLCHHDFYHHGEAIAIGMVVDAKLAVSKGLLPKEDLDSLLQVFERYQLPTTLERADVSATSLFDVFKTDKKNSEQHIIFILPTETGFTTLAINKDDHQFVEKLDSLL</sequence>